<gene>
    <name type="primary">ARRB1</name>
    <name type="ORF">QccE-17776</name>
</gene>
<protein>
    <recommendedName>
        <fullName>Beta-arrestin-1</fullName>
    </recommendedName>
    <alternativeName>
        <fullName>Arrestin beta-1</fullName>
    </alternativeName>
</protein>
<dbReference type="EMBL" id="AB169682">
    <property type="protein sequence ID" value="BAE01763.1"/>
    <property type="molecule type" value="mRNA"/>
</dbReference>
<dbReference type="RefSeq" id="XP_045227234.1">
    <property type="nucleotide sequence ID" value="XM_045371299.2"/>
</dbReference>
<dbReference type="SMR" id="Q4R562"/>
<dbReference type="STRING" id="9541.ENSMFAP00000031367"/>
<dbReference type="GeneID" id="101925869"/>
<dbReference type="VEuPathDB" id="HostDB:ENSMFAG00000042650"/>
<dbReference type="eggNOG" id="KOG3865">
    <property type="taxonomic scope" value="Eukaryota"/>
</dbReference>
<dbReference type="OrthoDB" id="298939at2759"/>
<dbReference type="Proteomes" id="UP000233100">
    <property type="component" value="Chromosome 14"/>
</dbReference>
<dbReference type="GO" id="GO:0005905">
    <property type="term" value="C:clathrin-coated pit"/>
    <property type="evidence" value="ECO:0007669"/>
    <property type="project" value="UniProtKB-SubCell"/>
</dbReference>
<dbReference type="GO" id="GO:0031410">
    <property type="term" value="C:cytoplasmic vesicle"/>
    <property type="evidence" value="ECO:0007669"/>
    <property type="project" value="UniProtKB-KW"/>
</dbReference>
<dbReference type="GO" id="GO:0005829">
    <property type="term" value="C:cytosol"/>
    <property type="evidence" value="ECO:0007669"/>
    <property type="project" value="TreeGrafter"/>
</dbReference>
<dbReference type="GO" id="GO:0005634">
    <property type="term" value="C:nucleus"/>
    <property type="evidence" value="ECO:0007669"/>
    <property type="project" value="UniProtKB-SubCell"/>
</dbReference>
<dbReference type="GO" id="GO:0005886">
    <property type="term" value="C:plasma membrane"/>
    <property type="evidence" value="ECO:0007669"/>
    <property type="project" value="UniProtKB-SubCell"/>
</dbReference>
<dbReference type="GO" id="GO:0031143">
    <property type="term" value="C:pseudopodium"/>
    <property type="evidence" value="ECO:0007669"/>
    <property type="project" value="UniProtKB-SubCell"/>
</dbReference>
<dbReference type="GO" id="GO:0001664">
    <property type="term" value="F:G protein-coupled receptor binding"/>
    <property type="evidence" value="ECO:0007669"/>
    <property type="project" value="TreeGrafter"/>
</dbReference>
<dbReference type="GO" id="GO:0002031">
    <property type="term" value="P:G protein-coupled receptor internalization"/>
    <property type="evidence" value="ECO:0007669"/>
    <property type="project" value="TreeGrafter"/>
</dbReference>
<dbReference type="GO" id="GO:0045746">
    <property type="term" value="P:negative regulation of Notch signaling pathway"/>
    <property type="evidence" value="ECO:0000250"/>
    <property type="project" value="UniProtKB"/>
</dbReference>
<dbReference type="GO" id="GO:0070374">
    <property type="term" value="P:positive regulation of ERK1 and ERK2 cascade"/>
    <property type="evidence" value="ECO:0007669"/>
    <property type="project" value="TreeGrafter"/>
</dbReference>
<dbReference type="GO" id="GO:0001934">
    <property type="term" value="P:positive regulation of protein phosphorylation"/>
    <property type="evidence" value="ECO:0000250"/>
    <property type="project" value="UniProtKB"/>
</dbReference>
<dbReference type="GO" id="GO:0002092">
    <property type="term" value="P:positive regulation of receptor internalization"/>
    <property type="evidence" value="ECO:0000250"/>
    <property type="project" value="UniProtKB"/>
</dbReference>
<dbReference type="GO" id="GO:0015031">
    <property type="term" value="P:protein transport"/>
    <property type="evidence" value="ECO:0007669"/>
    <property type="project" value="UniProtKB-KW"/>
</dbReference>
<dbReference type="GO" id="GO:0007165">
    <property type="term" value="P:signal transduction"/>
    <property type="evidence" value="ECO:0007669"/>
    <property type="project" value="InterPro"/>
</dbReference>
<dbReference type="GO" id="GO:0006511">
    <property type="term" value="P:ubiquitin-dependent protein catabolic process"/>
    <property type="evidence" value="ECO:0000250"/>
    <property type="project" value="UniProtKB"/>
</dbReference>
<dbReference type="FunFam" id="2.60.40.640:FF:000003">
    <property type="entry name" value="beta-arrestin-1 isoform X1"/>
    <property type="match status" value="1"/>
</dbReference>
<dbReference type="FunFam" id="2.60.40.840:FF:000001">
    <property type="entry name" value="beta-arrestin-1 isoform X1"/>
    <property type="match status" value="1"/>
</dbReference>
<dbReference type="Gene3D" id="2.60.40.640">
    <property type="match status" value="1"/>
</dbReference>
<dbReference type="Gene3D" id="2.60.40.840">
    <property type="match status" value="1"/>
</dbReference>
<dbReference type="InterPro" id="IPR000698">
    <property type="entry name" value="Arrestin"/>
</dbReference>
<dbReference type="InterPro" id="IPR014752">
    <property type="entry name" value="Arrestin-like_C"/>
</dbReference>
<dbReference type="InterPro" id="IPR011021">
    <property type="entry name" value="Arrestin-like_N"/>
</dbReference>
<dbReference type="InterPro" id="IPR011022">
    <property type="entry name" value="Arrestin_C-like"/>
</dbReference>
<dbReference type="InterPro" id="IPR017864">
    <property type="entry name" value="Arrestin_CS"/>
</dbReference>
<dbReference type="InterPro" id="IPR014753">
    <property type="entry name" value="Arrestin_N"/>
</dbReference>
<dbReference type="InterPro" id="IPR014756">
    <property type="entry name" value="Ig_E-set"/>
</dbReference>
<dbReference type="PANTHER" id="PTHR11792">
    <property type="entry name" value="ARRESTIN"/>
    <property type="match status" value="1"/>
</dbReference>
<dbReference type="PANTHER" id="PTHR11792:SF22">
    <property type="entry name" value="BETA-ARRESTIN-1"/>
    <property type="match status" value="1"/>
</dbReference>
<dbReference type="Pfam" id="PF02752">
    <property type="entry name" value="Arrestin_C"/>
    <property type="match status" value="1"/>
</dbReference>
<dbReference type="Pfam" id="PF00339">
    <property type="entry name" value="Arrestin_N"/>
    <property type="match status" value="1"/>
</dbReference>
<dbReference type="PRINTS" id="PR00309">
    <property type="entry name" value="ARRESTIN"/>
</dbReference>
<dbReference type="SMART" id="SM01017">
    <property type="entry name" value="Arrestin_C"/>
    <property type="match status" value="1"/>
</dbReference>
<dbReference type="SUPFAM" id="SSF81296">
    <property type="entry name" value="E set domains"/>
    <property type="match status" value="2"/>
</dbReference>
<dbReference type="PROSITE" id="PS00295">
    <property type="entry name" value="ARRESTINS"/>
    <property type="match status" value="1"/>
</dbReference>
<accession>Q4R562</accession>
<keyword id="KW-1003">Cell membrane</keyword>
<keyword id="KW-0966">Cell projection</keyword>
<keyword id="KW-0168">Coated pit</keyword>
<keyword id="KW-0963">Cytoplasm</keyword>
<keyword id="KW-0968">Cytoplasmic vesicle</keyword>
<keyword id="KW-0472">Membrane</keyword>
<keyword id="KW-0539">Nucleus</keyword>
<keyword id="KW-0597">Phosphoprotein</keyword>
<keyword id="KW-0653">Protein transport</keyword>
<keyword id="KW-1185">Reference proteome</keyword>
<keyword id="KW-0734">Signal transduction inhibitor</keyword>
<keyword id="KW-0804">Transcription</keyword>
<keyword id="KW-0805">Transcription regulation</keyword>
<keyword id="KW-0813">Transport</keyword>
<keyword id="KW-0832">Ubl conjugation</keyword>
<name>ARRB1_MACFA</name>
<organism>
    <name type="scientific">Macaca fascicularis</name>
    <name type="common">Crab-eating macaque</name>
    <name type="synonym">Cynomolgus monkey</name>
    <dbReference type="NCBI Taxonomy" id="9541"/>
    <lineage>
        <taxon>Eukaryota</taxon>
        <taxon>Metazoa</taxon>
        <taxon>Chordata</taxon>
        <taxon>Craniata</taxon>
        <taxon>Vertebrata</taxon>
        <taxon>Euteleostomi</taxon>
        <taxon>Mammalia</taxon>
        <taxon>Eutheria</taxon>
        <taxon>Euarchontoglires</taxon>
        <taxon>Primates</taxon>
        <taxon>Haplorrhini</taxon>
        <taxon>Catarrhini</taxon>
        <taxon>Cercopithecidae</taxon>
        <taxon>Cercopithecinae</taxon>
        <taxon>Macaca</taxon>
    </lineage>
</organism>
<proteinExistence type="evidence at transcript level"/>
<comment type="function">
    <text evidence="1 2">Functions in regulating agonist-mediated G-protein coupled receptor (GPCR) signaling by mediating both receptor desensitization and resensitization processes. During homologous desensitization, beta-arrestins bind to the GPRK-phosphorylated receptor and sterically preclude its coupling to the cognate G-protein; the binding appears to require additional receptor determinants exposed only in the active receptor conformation. The beta-arrestins target many receptors for internalization by acting as endocytic adapters (CLASPs, clathrin-associated sorting proteins) and recruiting the GPRCs to the adapter protein 2 complex 2 (AP-2) in clathrin-coated pits (CCPs). However, the extent of beta-arrestin involvement appears to vary significantly depending on the receptor, agonist and cell type. Internalized arrestin-receptor complexes traffic to intracellular endosomes, where they remain uncoupled from G-proteins. Two different modes of arrestin-mediated internalization occur. Class A receptors, like ADRB2, OPRM1, ENDRA, D1AR and ADRA1B dissociate from beta-arrestin at or near the plasma membrane and undergo rapid recycling. Class B receptors, like AVPR2, AGTR1, NTSR1, TRHR and TACR1 internalize as a complex with arrestin and traffic with it to endosomal vesicles, presumably as desensitized receptors, for extended periods of time. Receptor resensitization then requires that receptor-bound arrestin is removed so that the receptor can be dephosphorylated and returned to the plasma membrane. Involved in internalization of P2RY4 and UTP-stimulated internalization of P2RY2. Involved in phosphorylation-dependent internalization of OPRD1 ands subsequent recycling. Involved in the degradation of cAMP by recruiting cAMP phosphodiesterases to ligand-activated receptors. Beta-arrestins function as multivalent adapter proteins that can switch the GPCR from a G-protein signaling mode that transmits short-lived signals from the plasma membrane via small molecule second messengers and ion channels to a beta-arrestin signaling mode that transmits a distinct set of signals that are initiated as the receptor internalizes and transits the intracellular compartment. Acts as a signaling scaffold for MAPK pathways such as MAPK1/3 (ERK1/2). ERK1/2 activated by the beta-arrestin scaffold is largely excluded from the nucleus and confined to cytoplasmic locations such as endocytic vesicles, also called beta-arrestin signalosomes. Recruits c-Src/SRC to ADRB2 resulting in ERK activation. GPCRs for which the beta-arrestin-mediated signaling relies on both ARRB1 and ARRB2 (codependent regulation) include ADRB2, F2RL1 and PTH1R. For some GPCRs the beta-arrestin-mediated signaling relies on either ARRB1 or ARRB2 and is inhibited by the other respective beta-arrestin form (reciprocal regulation). Inhibits ERK1/2 signaling in AGTR1- and AVPR2-mediated activation (reciprocal regulation). Is required for SP-stimulated endocytosis of NK1R and recruits c-Src/SRC to internalized NK1R resulting in ERK1/2 activation, which is required for the antiapoptotic effects of SP. Is involved in proteinase-activated F2RL1-mediated ERK activity. Acts as a signaling scaffold for the AKT1 pathway. Is involved in alpha-thrombin-stimulated AKT1 signaling. Is involved in IGF1-stimulated AKT1 signaling leading to increased protection from apoptosis. Involved in activation of the p38 MAPK signaling pathway and in actin bundle formation. Involved in F2RL1-mediated cytoskeletal rearrangement and chemotaxis. Involved in AGTR1-mediated stress fiber formation by acting together with GNAQ to activate RHOA. Appears to function as signaling scaffold involved in regulation of MIP-1-beta-stimulated CCR5-dependent chemotaxis. Involved in attenuation of NF-kappa-B-dependent transcription in response to GPCR or cytokine stimulation by interacting with and stabilizing CHUK. May serve as nuclear messenger for GPCRs. Involved in OPRD1-stimulated transcriptional regulation by translocating to CDKN1B and FOS promoter regions and recruiting EP300 resulting in acetylation of histone H4. Involved in regulation of LEF1 transcriptional activity via interaction with DVL1 and/or DVL2 Also involved in regulation of receptors other than GPCRs. Involved in Toll-like receptor and IL-1 receptor signaling through the interaction with TRAF6 which prevents TRAF6 autoubiquitination and oligomerization required for activation of NF-kappa-B and JUN. Involved in IL8-mediated granule release in neutrophils. Binds phosphoinositides. Binds inositolhexakisphosphate (InsP6) (By similarity). Required for atypical chemokine receptor ACKR2-induced RAC1-LIMK1-PAK1-dependent phosphorylation of cofilin (CFL1) and for the up-regulation of ACKR2 from endosomal compartment to cell membrane, increasing its efficiency in chemokine uptake and degradation. Involved in the internalization of the atypical chemokine receptor ACKR3 (By similarity). Negatively regulates the NOTCH signaling pathway by mediating the ubiquitination and degradation of NOTCH1 by ITCH. Participates in the recruitment of the ubiquitin-protein ligase to the receptor (By similarity).</text>
</comment>
<comment type="subunit">
    <text evidence="2">Monomer. Homodimer. Homooligomer; the self-association is mediated by InsP6-binding. Heterooligomer with ARRB2; the association is mediated by InsP6-binding. Interacts with ADRB2 (phosphorylated). Interacts with CHRM2 (phosphorylated). Interacts with LHCGR. Interacts with CYTH2 and CASR. Interacts with AP2B1 (dephosphorylated); phosphorylation of AP2B1 disrupts the interaction. Interacts (dephosphorylated at Ser-404) with CLTC. Interacts with CCR2 and GRK2. Interacts with CRR5. Interacts with PTAFR (phosphorylated on serine residues). Interacts with CLTC and MAP2K3. Interacts with CREB1. Interacts with TRAF6. Interacts with IGF1R and MDM2. Interacts with C5AR1. Interacts with PDE4D. Interacts with SRC (via the SH3 domain and the protein kinase domain); the interaction is independent of the phosphorylation state of SRC C-terminus. Interacts with TACR1. Interacts with RAF1. Interacts with CHUK, IKBKB and MAP3K14. Interacts with DVL1; the interaction is enhanced by phosphorylation of DVL1. Interacts with DVL2; the interaction is enhanced by phosphorylation of DVL2. Interacts with IGF1R. Associates with MAP kinase p38. Part of a MAPK signaling complex consisting of TACR1, ARRB1, SRC, MAPK1 (activated) and MAPK3 (activated). Part of a MAPK signaling complex consisting of F2RL1, ARRB1, RAF1, MAPK1 (activated) and MAPK3 (activated). Interacts with GPR143 (By similarity). Interacts with MAP2K4/MKK4. Interacts with HCK and CXCR1 (phosphorylated) (By similarity). Interacts with ACKR3 and ACKR4 (By similarity). Interacts with ARRDC1; the interaction is direct (By similarity). Interacts with GPR61, GPR62 and GPR135 (By similarity).</text>
</comment>
<comment type="subcellular location">
    <subcellularLocation>
        <location evidence="1">Cytoplasm</location>
    </subcellularLocation>
    <subcellularLocation>
        <location evidence="1">Nucleus</location>
    </subcellularLocation>
    <subcellularLocation>
        <location evidence="1">Cell membrane</location>
    </subcellularLocation>
    <subcellularLocation>
        <location evidence="5">Membrane</location>
        <location evidence="5">Clathrin-coated pit</location>
    </subcellularLocation>
    <subcellularLocation>
        <location evidence="1">Cell projection</location>
        <location evidence="1">Pseudopodium</location>
    </subcellularLocation>
    <subcellularLocation>
        <location evidence="1">Cytoplasmic vesicle</location>
    </subcellularLocation>
    <text evidence="1">Translocates to the plasma membrane and colocalizes with antagonist-stimulated GPCRs. The monomeric form is predominantly located in the nucleus. The oligomeric form is located in the cytoplasm. Translocates to the nucleus upon stimulation of OPRD1 (By similarity).</text>
</comment>
<comment type="domain">
    <text evidence="1">The [DE]-X(1,2)-F-X-X-[FL]-X-X-X-R motif mediates interaction the AP-2 complex subunit AP2B1. Binding to phosphorylated GPCRs induces a conformationanl change that exposes the motif to the surface (By similarity).</text>
</comment>
<comment type="domain">
    <text evidence="1">The N-terminus binds InsP6 with low affinity.</text>
</comment>
<comment type="domain">
    <text evidence="1">The C-terminus binds InsP6 with high affinity.</text>
</comment>
<comment type="PTM">
    <text evidence="1">Constitutively phosphorylated at in the cytoplasm. At the plasma membrane, is rapidly dephosphorylated, a process that is required for clathrin binding and ADRB2 endocytosis but not for ADRB2 binding and desensitization. Once internalized, is rephosphorylated (By similarity).</text>
</comment>
<comment type="PTM">
    <text evidence="5">The ubiquitination status appears to regulate the formation and trafficking of beta-arrestin-GPCR complexes and signaling. Ubiquitination appears to occur GPCR-specific (Probable). Ubiquitinated by MDM2; the ubiquitination is required for rapid internalization of ADRB2. Deubiquitinated by USP33; the deubiquitination leads to a dissociation of the beta-arrestin-GPCR complex. Stimulation of a class A GPCR, such as ADRB2, induces transient ubiquitination and subsequently promotes association with USP33.</text>
</comment>
<comment type="similarity">
    <text evidence="5">Belongs to the arrestin family.</text>
</comment>
<feature type="chain" id="PRO_0000250484" description="Beta-arrestin-1">
    <location>
        <begin position="1"/>
        <end position="410"/>
    </location>
</feature>
<feature type="region of interest" description="Interaction with SRC" evidence="1">
    <location>
        <begin position="1"/>
        <end position="163"/>
    </location>
</feature>
<feature type="region of interest" description="Interaction with CHRM2" evidence="1">
    <location>
        <begin position="45"/>
        <end position="86"/>
    </location>
</feature>
<feature type="region of interest" description="Interaction with TRAF6" evidence="1">
    <location>
        <begin position="318"/>
        <end position="410"/>
    </location>
</feature>
<feature type="region of interest" description="Disordered" evidence="4">
    <location>
        <begin position="389"/>
        <end position="410"/>
    </location>
</feature>
<feature type="short sequence motif" description="[DE]-X(1,2)-F-X-X-[FL]-X-X-X-R motif">
    <location>
        <begin position="385"/>
        <end position="395"/>
    </location>
</feature>
<feature type="compositionally biased region" description="Polar residues" evidence="4">
    <location>
        <begin position="401"/>
        <end position="410"/>
    </location>
</feature>
<feature type="binding site" evidence="1">
    <location>
        <position position="250"/>
    </location>
    <ligand>
        <name>1D-myo-inositol hexakisphosphate</name>
        <dbReference type="ChEBI" id="CHEBI:58130"/>
    </ligand>
</feature>
<feature type="binding site" evidence="1">
    <location>
        <position position="255"/>
    </location>
    <ligand>
        <name>1D-myo-inositol hexakisphosphate</name>
        <dbReference type="ChEBI" id="CHEBI:58130"/>
    </ligand>
</feature>
<feature type="binding site" evidence="1">
    <location>
        <position position="324"/>
    </location>
    <ligand>
        <name>1D-myo-inositol hexakisphosphate</name>
        <dbReference type="ChEBI" id="CHEBI:58130"/>
    </ligand>
</feature>
<feature type="binding site" evidence="1">
    <location>
        <position position="326"/>
    </location>
    <ligand>
        <name>1D-myo-inositol hexakisphosphate</name>
        <dbReference type="ChEBI" id="CHEBI:58130"/>
    </ligand>
</feature>
<feature type="modified residue" description="Phosphotyrosine" evidence="3">
    <location>
        <position position="47"/>
    </location>
</feature>
<feature type="modified residue" description="Phosphoserine; by GRK5" evidence="2">
    <location>
        <position position="404"/>
    </location>
</feature>
<sequence length="410" mass="46323">MGDKGTRVFKKASPNGKLTVYLGKRDFVDHIDLVDPVDGVVLVDPEYLKERRVYVTLTCAFRYGREDLDVLGLTFRKDLFVANVQSFPPAPEDKKPLTRLQERLIKKLGEHAYPFTFEIPPNLPCSVTLQPGPEDTGKACGVDYEVKAFCAENLEEKIHKRNSVRLVIRKVQYAPERPGPQPTAETTRQFLMSDKPLHLEASLDKEIYYHGEPISVNVHVTNNTNKTVKKIKISVRQYADICLFNTAQYKCPVAMEEADDTVAPSSTFCKVYTLTPFLANNREKRGLALDGKLKHEDTNLASSTLLREGANREILGIIVSYKVKVKLVVSRGGDVAVELPFTLMHPKPKEEPLHREVPENQTPVDTNLIELDTNDDDIVFEDFARQRLKGMKDDKEEEENGTGSPQLNNR</sequence>
<evidence type="ECO:0000250" key="1"/>
<evidence type="ECO:0000250" key="2">
    <source>
        <dbReference type="UniProtKB" id="P49407"/>
    </source>
</evidence>
<evidence type="ECO:0000250" key="3">
    <source>
        <dbReference type="UniProtKB" id="Q8BWG8"/>
    </source>
</evidence>
<evidence type="ECO:0000256" key="4">
    <source>
        <dbReference type="SAM" id="MobiDB-lite"/>
    </source>
</evidence>
<evidence type="ECO:0000305" key="5"/>
<reference key="1">
    <citation type="submission" date="2005-06" db="EMBL/GenBank/DDBJ databases">
        <title>DNA sequences of macaque genes expressed in brain or testis and its evolutionary implications.</title>
        <authorList>
            <consortium name="International consortium for macaque cDNA sequencing and analysis"/>
        </authorList>
    </citation>
    <scope>NUCLEOTIDE SEQUENCE [LARGE SCALE MRNA]</scope>
    <source>
        <tissue>Brain cortex</tissue>
    </source>
</reference>